<accession>Q8DMA3</accession>
<reference key="1">
    <citation type="journal article" date="2002" name="DNA Res.">
        <title>Complete genome structure of the thermophilic cyanobacterium Thermosynechococcus elongatus BP-1.</title>
        <authorList>
            <person name="Nakamura Y."/>
            <person name="Kaneko T."/>
            <person name="Sato S."/>
            <person name="Ikeuchi M."/>
            <person name="Katoh H."/>
            <person name="Sasamoto S."/>
            <person name="Watanabe A."/>
            <person name="Iriguchi M."/>
            <person name="Kawashima K."/>
            <person name="Kimura T."/>
            <person name="Kishida Y."/>
            <person name="Kiyokawa C."/>
            <person name="Kohara M."/>
            <person name="Matsumoto M."/>
            <person name="Matsuno A."/>
            <person name="Nakazaki N."/>
            <person name="Shimpo S."/>
            <person name="Sugimoto M."/>
            <person name="Takeuchi C."/>
            <person name="Yamada M."/>
            <person name="Tabata S."/>
        </authorList>
    </citation>
    <scope>NUCLEOTIDE SEQUENCE [LARGE SCALE GENOMIC DNA]</scope>
    <source>
        <strain>NIES-2133 / IAM M-273 / BP-1</strain>
    </source>
</reference>
<gene>
    <name evidence="1" type="primary">queF</name>
    <name type="ordered locus">tll0218</name>
</gene>
<feature type="chain" id="PRO_0000163009" description="NADPH-dependent 7-cyano-7-deazaguanine reductase">
    <location>
        <begin position="1"/>
        <end position="132"/>
    </location>
</feature>
<feature type="active site" description="Thioimide intermediate" evidence="1">
    <location>
        <position position="43"/>
    </location>
</feature>
<feature type="active site" description="Proton donor" evidence="1">
    <location>
        <position position="50"/>
    </location>
</feature>
<feature type="binding site" evidence="1">
    <location>
        <begin position="65"/>
        <end position="67"/>
    </location>
    <ligand>
        <name>substrate</name>
    </ligand>
</feature>
<feature type="binding site" evidence="1">
    <location>
        <begin position="84"/>
        <end position="85"/>
    </location>
    <ligand>
        <name>substrate</name>
    </ligand>
</feature>
<comment type="function">
    <text evidence="1">Catalyzes the NADPH-dependent reduction of 7-cyano-7-deazaguanine (preQ0) to 7-aminomethyl-7-deazaguanine (preQ1).</text>
</comment>
<comment type="catalytic activity">
    <reaction evidence="1">
        <text>7-aminomethyl-7-carbaguanine + 2 NADP(+) = 7-cyano-7-deazaguanine + 2 NADPH + 3 H(+)</text>
        <dbReference type="Rhea" id="RHEA:13409"/>
        <dbReference type="ChEBI" id="CHEBI:15378"/>
        <dbReference type="ChEBI" id="CHEBI:45075"/>
        <dbReference type="ChEBI" id="CHEBI:57783"/>
        <dbReference type="ChEBI" id="CHEBI:58349"/>
        <dbReference type="ChEBI" id="CHEBI:58703"/>
        <dbReference type="EC" id="1.7.1.13"/>
    </reaction>
</comment>
<comment type="pathway">
    <text evidence="1">tRNA modification; tRNA-queuosine biosynthesis.</text>
</comment>
<comment type="subcellular location">
    <subcellularLocation>
        <location evidence="1">Cytoplasm</location>
    </subcellularLocation>
</comment>
<comment type="similarity">
    <text evidence="1">Belongs to the GTP cyclohydrolase I family. QueF type 1 subfamily.</text>
</comment>
<proteinExistence type="inferred from homology"/>
<keyword id="KW-0963">Cytoplasm</keyword>
<keyword id="KW-0521">NADP</keyword>
<keyword id="KW-0560">Oxidoreductase</keyword>
<keyword id="KW-0671">Queuosine biosynthesis</keyword>
<keyword id="KW-1185">Reference proteome</keyword>
<protein>
    <recommendedName>
        <fullName evidence="1">NADPH-dependent 7-cyano-7-deazaguanine reductase</fullName>
        <ecNumber evidence="1">1.7.1.13</ecNumber>
    </recommendedName>
    <alternativeName>
        <fullName evidence="1">7-cyano-7-carbaguanine reductase</fullName>
    </alternativeName>
    <alternativeName>
        <fullName evidence="1">NADPH-dependent nitrile oxidoreductase</fullName>
    </alternativeName>
    <alternativeName>
        <fullName evidence="1">PreQ(0) reductase</fullName>
    </alternativeName>
</protein>
<evidence type="ECO:0000255" key="1">
    <source>
        <dbReference type="HAMAP-Rule" id="MF_00818"/>
    </source>
</evidence>
<dbReference type="EC" id="1.7.1.13" evidence="1"/>
<dbReference type="EMBL" id="BA000039">
    <property type="protein sequence ID" value="BAC07771.1"/>
    <property type="molecule type" value="Genomic_DNA"/>
</dbReference>
<dbReference type="RefSeq" id="NP_681009.1">
    <property type="nucleotide sequence ID" value="NC_004113.1"/>
</dbReference>
<dbReference type="RefSeq" id="WP_011056073.1">
    <property type="nucleotide sequence ID" value="NC_004113.1"/>
</dbReference>
<dbReference type="SMR" id="Q8DMA3"/>
<dbReference type="STRING" id="197221.gene:10746800"/>
<dbReference type="EnsemblBacteria" id="BAC07771">
    <property type="protein sequence ID" value="BAC07771"/>
    <property type="gene ID" value="BAC07771"/>
</dbReference>
<dbReference type="KEGG" id="tel:tll0218"/>
<dbReference type="PATRIC" id="fig|197221.4.peg.223"/>
<dbReference type="eggNOG" id="COG0780">
    <property type="taxonomic scope" value="Bacteria"/>
</dbReference>
<dbReference type="UniPathway" id="UPA00392"/>
<dbReference type="Proteomes" id="UP000000440">
    <property type="component" value="Chromosome"/>
</dbReference>
<dbReference type="GO" id="GO:0005737">
    <property type="term" value="C:cytoplasm"/>
    <property type="evidence" value="ECO:0007669"/>
    <property type="project" value="UniProtKB-SubCell"/>
</dbReference>
<dbReference type="GO" id="GO:0033739">
    <property type="term" value="F:preQ1 synthase activity"/>
    <property type="evidence" value="ECO:0007669"/>
    <property type="project" value="UniProtKB-UniRule"/>
</dbReference>
<dbReference type="GO" id="GO:0008616">
    <property type="term" value="P:queuosine biosynthetic process"/>
    <property type="evidence" value="ECO:0007669"/>
    <property type="project" value="UniProtKB-UniRule"/>
</dbReference>
<dbReference type="GO" id="GO:0006400">
    <property type="term" value="P:tRNA modification"/>
    <property type="evidence" value="ECO:0007669"/>
    <property type="project" value="UniProtKB-UniRule"/>
</dbReference>
<dbReference type="Gene3D" id="3.30.1130.10">
    <property type="match status" value="1"/>
</dbReference>
<dbReference type="HAMAP" id="MF_00818">
    <property type="entry name" value="QueF_type1"/>
    <property type="match status" value="1"/>
</dbReference>
<dbReference type="InterPro" id="IPR043133">
    <property type="entry name" value="GTP-CH-I_C/QueF"/>
</dbReference>
<dbReference type="InterPro" id="IPR050084">
    <property type="entry name" value="NADPH_dep_7-cyano-7-deazaG_red"/>
</dbReference>
<dbReference type="InterPro" id="IPR029500">
    <property type="entry name" value="QueF"/>
</dbReference>
<dbReference type="InterPro" id="IPR016856">
    <property type="entry name" value="QueF_type1"/>
</dbReference>
<dbReference type="NCBIfam" id="TIGR03139">
    <property type="entry name" value="QueF-II"/>
    <property type="match status" value="1"/>
</dbReference>
<dbReference type="PANTHER" id="PTHR34354">
    <property type="entry name" value="NADPH-DEPENDENT 7-CYANO-7-DEAZAGUANINE REDUCTASE"/>
    <property type="match status" value="1"/>
</dbReference>
<dbReference type="PANTHER" id="PTHR34354:SF1">
    <property type="entry name" value="NADPH-DEPENDENT 7-CYANO-7-DEAZAGUANINE REDUCTASE"/>
    <property type="match status" value="1"/>
</dbReference>
<dbReference type="Pfam" id="PF14489">
    <property type="entry name" value="QueF"/>
    <property type="match status" value="1"/>
</dbReference>
<dbReference type="PIRSF" id="PIRSF027377">
    <property type="entry name" value="Nitrile_oxidored_QueF"/>
    <property type="match status" value="1"/>
</dbReference>
<dbReference type="SUPFAM" id="SSF55620">
    <property type="entry name" value="Tetrahydrobiopterin biosynthesis enzymes-like"/>
    <property type="match status" value="1"/>
</dbReference>
<sequence length="132" mass="15227">MQVSEMKYGERAIQEGQLITFPNPRPGRQYTIEITLPEFTCKCPFSGYPDFATLYVSYIPHEKVVELKAIKLYINSYRDRYISHEEAVNQVLDDLVAACDPLYMKIKGDFAPRGNVHTVITVEHHRQTESLC</sequence>
<name>QUEF_THEVB</name>
<organism>
    <name type="scientific">Thermosynechococcus vestitus (strain NIES-2133 / IAM M-273 / BP-1)</name>
    <dbReference type="NCBI Taxonomy" id="197221"/>
    <lineage>
        <taxon>Bacteria</taxon>
        <taxon>Bacillati</taxon>
        <taxon>Cyanobacteriota</taxon>
        <taxon>Cyanophyceae</taxon>
        <taxon>Acaryochloridales</taxon>
        <taxon>Thermosynechococcaceae</taxon>
        <taxon>Thermosynechococcus</taxon>
    </lineage>
</organism>